<reference key="1">
    <citation type="journal article" date="2011" name="Proc. Natl. Acad. Sci. U.S.A.">
        <title>Obligate biotrophy features unraveled by the genomic analysis of rust fungi.</title>
        <authorList>
            <person name="Duplessis S."/>
            <person name="Cuomo C.A."/>
            <person name="Lin Y.-C."/>
            <person name="Aerts A."/>
            <person name="Tisserant E."/>
            <person name="Veneault-Fourrey C."/>
            <person name="Joly D.L."/>
            <person name="Hacquard S."/>
            <person name="Amselem J."/>
            <person name="Cantarel B.L."/>
            <person name="Chiu R."/>
            <person name="Coutinho P.M."/>
            <person name="Feau N."/>
            <person name="Field M."/>
            <person name="Frey P."/>
            <person name="Gelhaye E."/>
            <person name="Goldberg J."/>
            <person name="Grabherr M.G."/>
            <person name="Kodira C.D."/>
            <person name="Kohler A."/>
            <person name="Kuees U."/>
            <person name="Lindquist E.A."/>
            <person name="Lucas S.M."/>
            <person name="Mago R."/>
            <person name="Mauceli E."/>
            <person name="Morin E."/>
            <person name="Murat C."/>
            <person name="Pangilinan J.L."/>
            <person name="Park R."/>
            <person name="Pearson M."/>
            <person name="Quesneville H."/>
            <person name="Rouhier N."/>
            <person name="Sakthikumar S."/>
            <person name="Salamov A.A."/>
            <person name="Schmutz J."/>
            <person name="Selles B."/>
            <person name="Shapiro H."/>
            <person name="Tanguay P."/>
            <person name="Tuskan G.A."/>
            <person name="Henrissat B."/>
            <person name="Van de Peer Y."/>
            <person name="Rouze P."/>
            <person name="Ellis J.G."/>
            <person name="Dodds P.N."/>
            <person name="Schein J.E."/>
            <person name="Zhong S."/>
            <person name="Hamelin R.C."/>
            <person name="Grigoriev I.V."/>
            <person name="Szabo L.J."/>
            <person name="Martin F."/>
        </authorList>
    </citation>
    <scope>NUCLEOTIDE SEQUENCE [LARGE SCALE GENOMIC DNA]</scope>
    <source>
        <strain>CRL 75-36-700-3 / race SCCL</strain>
    </source>
</reference>
<reference key="2">
    <citation type="journal article" date="2017" name="G3 (Bethesda)">
        <title>Comparative analysis highlights variable genome content of wheat rusts and divergence of the mating loci.</title>
        <authorList>
            <person name="Cuomo C.A."/>
            <person name="Bakkeren G."/>
            <person name="Khalil H.B."/>
            <person name="Panwar V."/>
            <person name="Joly D."/>
            <person name="Linning R."/>
            <person name="Sakthikumar S."/>
            <person name="Song X."/>
            <person name="Adiconis X."/>
            <person name="Fan L."/>
            <person name="Goldberg J.M."/>
            <person name="Levin J.Z."/>
            <person name="Young S."/>
            <person name="Zeng Q."/>
            <person name="Anikster Y."/>
            <person name="Bruce M."/>
            <person name="Wang M."/>
            <person name="Yin C."/>
            <person name="McCallum B."/>
            <person name="Szabo L.J."/>
            <person name="Hulbert S."/>
            <person name="Chen X."/>
            <person name="Fellers J.P."/>
        </authorList>
    </citation>
    <scope>GENOME REANNOTATION</scope>
    <source>
        <strain>CRL 75-36-700-3 / race SCCL</strain>
    </source>
</reference>
<feature type="chain" id="PRO_0000415879" description="Thiamine thiazole synthase">
    <location>
        <begin position="1"/>
        <end position="336"/>
    </location>
</feature>
<feature type="binding site" evidence="1">
    <location>
        <position position="89"/>
    </location>
    <ligand>
        <name>substrate</name>
    </ligand>
</feature>
<feature type="binding site" evidence="1">
    <location>
        <begin position="110"/>
        <end position="111"/>
    </location>
    <ligand>
        <name>substrate</name>
    </ligand>
</feature>
<feature type="binding site" evidence="1">
    <location>
        <position position="118"/>
    </location>
    <ligand>
        <name>substrate</name>
    </ligand>
</feature>
<feature type="binding site" evidence="1">
    <location>
        <position position="183"/>
    </location>
    <ligand>
        <name>substrate</name>
    </ligand>
</feature>
<feature type="binding site" evidence="1">
    <location>
        <position position="221"/>
    </location>
    <ligand>
        <name>substrate</name>
    </ligand>
</feature>
<feature type="binding site" evidence="1">
    <location>
        <position position="236"/>
    </location>
    <ligand>
        <name>substrate</name>
    </ligand>
</feature>
<feature type="binding site" evidence="1">
    <location>
        <position position="288"/>
    </location>
    <ligand>
        <name>substrate</name>
    </ligand>
</feature>
<feature type="binding site" evidence="1">
    <location>
        <begin position="298"/>
        <end position="300"/>
    </location>
    <ligand>
        <name>substrate</name>
    </ligand>
</feature>
<feature type="modified residue" description="2,3-didehydroalanine (Cys)" evidence="1">
    <location>
        <position position="219"/>
    </location>
</feature>
<protein>
    <recommendedName>
        <fullName evidence="1">Thiamine thiazole synthase</fullName>
        <ecNumber evidence="1">2.4.2.60</ecNumber>
    </recommendedName>
    <alternativeName>
        <fullName evidence="1">Thiazole biosynthetic enzyme</fullName>
    </alternativeName>
</protein>
<dbReference type="EC" id="2.4.2.60" evidence="1"/>
<dbReference type="EMBL" id="DS178264">
    <property type="protein sequence ID" value="EFP75973.1"/>
    <property type="molecule type" value="Genomic_DNA"/>
</dbReference>
<dbReference type="RefSeq" id="XP_003320392.1">
    <property type="nucleotide sequence ID" value="XM_003320344.2"/>
</dbReference>
<dbReference type="SMR" id="E3JV98"/>
<dbReference type="FunCoup" id="E3JV98">
    <property type="interactions" value="495"/>
</dbReference>
<dbReference type="STRING" id="418459.E3JV98"/>
<dbReference type="EnsemblFungi" id="EFP75973">
    <property type="protein sequence ID" value="EFP75973"/>
    <property type="gene ID" value="PGTG_01304"/>
</dbReference>
<dbReference type="GeneID" id="10533053"/>
<dbReference type="KEGG" id="pgr:PGTG_01304"/>
<dbReference type="VEuPathDB" id="FungiDB:PGTG_01304"/>
<dbReference type="eggNOG" id="KOG2960">
    <property type="taxonomic scope" value="Eukaryota"/>
</dbReference>
<dbReference type="HOGENOM" id="CLU_053727_0_0_1"/>
<dbReference type="InParanoid" id="E3JV98"/>
<dbReference type="OMA" id="MFPRIVV"/>
<dbReference type="OrthoDB" id="410463at2759"/>
<dbReference type="Proteomes" id="UP000008783">
    <property type="component" value="Unassembled WGS sequence"/>
</dbReference>
<dbReference type="GO" id="GO:0005829">
    <property type="term" value="C:cytosol"/>
    <property type="evidence" value="ECO:0007669"/>
    <property type="project" value="UniProtKB-UniRule"/>
</dbReference>
<dbReference type="GO" id="GO:0005634">
    <property type="term" value="C:nucleus"/>
    <property type="evidence" value="ECO:0007669"/>
    <property type="project" value="UniProtKB-SubCell"/>
</dbReference>
<dbReference type="GO" id="GO:0160205">
    <property type="term" value="F:cysteine-dependent adenosine diphosphate thiazole synthase activity"/>
    <property type="evidence" value="ECO:0007669"/>
    <property type="project" value="UniProtKB-EC"/>
</dbReference>
<dbReference type="GO" id="GO:0005506">
    <property type="term" value="F:iron ion binding"/>
    <property type="evidence" value="ECO:0000318"/>
    <property type="project" value="GO_Central"/>
</dbReference>
<dbReference type="GO" id="GO:0009228">
    <property type="term" value="P:thiamine biosynthetic process"/>
    <property type="evidence" value="ECO:0007669"/>
    <property type="project" value="UniProtKB-UniRule"/>
</dbReference>
<dbReference type="GO" id="GO:0052837">
    <property type="term" value="P:thiazole biosynthetic process"/>
    <property type="evidence" value="ECO:0000318"/>
    <property type="project" value="GO_Central"/>
</dbReference>
<dbReference type="Gene3D" id="6.10.250.2840">
    <property type="match status" value="1"/>
</dbReference>
<dbReference type="Gene3D" id="3.50.50.60">
    <property type="entry name" value="FAD/NAD(P)-binding domain"/>
    <property type="match status" value="1"/>
</dbReference>
<dbReference type="HAMAP" id="MF_03158">
    <property type="entry name" value="THI4"/>
    <property type="match status" value="1"/>
</dbReference>
<dbReference type="InterPro" id="IPR036188">
    <property type="entry name" value="FAD/NAD-bd_sf"/>
</dbReference>
<dbReference type="InterPro" id="IPR027495">
    <property type="entry name" value="Sti35"/>
</dbReference>
<dbReference type="InterPro" id="IPR002922">
    <property type="entry name" value="Thi4_fam"/>
</dbReference>
<dbReference type="NCBIfam" id="TIGR00292">
    <property type="entry name" value="sulfide-dependent adenosine diphosphate thiazole synthase"/>
    <property type="match status" value="1"/>
</dbReference>
<dbReference type="PANTHER" id="PTHR43422">
    <property type="entry name" value="THIAMINE THIAZOLE SYNTHASE"/>
    <property type="match status" value="1"/>
</dbReference>
<dbReference type="PANTHER" id="PTHR43422:SF3">
    <property type="entry name" value="THIAMINE THIAZOLE SYNTHASE"/>
    <property type="match status" value="1"/>
</dbReference>
<dbReference type="Pfam" id="PF01946">
    <property type="entry name" value="Thi4"/>
    <property type="match status" value="1"/>
</dbReference>
<dbReference type="SUPFAM" id="SSF51905">
    <property type="entry name" value="FAD/NAD(P)-binding domain"/>
    <property type="match status" value="1"/>
</dbReference>
<comment type="function">
    <text evidence="1">Involved in biosynthesis of the thiamine precursor thiazole. Catalyzes the conversion of NAD and glycine to adenosine diphosphate 5-(2-hydroxyethyl)-4-methylthiazole-2-carboxylic acid (ADT), an adenylated thiazole intermediate. The reaction includes an iron-dependent sulfide transfer from a conserved cysteine residue of the protein to a thiazole intermediate. The enzyme can only undergo a single turnover, which suggests it is a suicide enzyme. May have additional roles in adaptation to various stress conditions and in DNA damage tolerance.</text>
</comment>
<comment type="catalytic activity">
    <reaction evidence="1">
        <text>[ADP-thiazole synthase]-L-cysteine + glycine + NAD(+) = [ADP-thiazole synthase]-dehydroalanine + ADP-5-ethyl-4-methylthiazole-2-carboxylate + nicotinamide + 3 H2O + 2 H(+)</text>
        <dbReference type="Rhea" id="RHEA:55708"/>
        <dbReference type="Rhea" id="RHEA-COMP:14264"/>
        <dbReference type="Rhea" id="RHEA-COMP:14265"/>
        <dbReference type="ChEBI" id="CHEBI:15377"/>
        <dbReference type="ChEBI" id="CHEBI:15378"/>
        <dbReference type="ChEBI" id="CHEBI:17154"/>
        <dbReference type="ChEBI" id="CHEBI:29950"/>
        <dbReference type="ChEBI" id="CHEBI:57305"/>
        <dbReference type="ChEBI" id="CHEBI:57540"/>
        <dbReference type="ChEBI" id="CHEBI:90873"/>
        <dbReference type="ChEBI" id="CHEBI:139151"/>
        <dbReference type="EC" id="2.4.2.60"/>
    </reaction>
</comment>
<comment type="cofactor">
    <cofactor evidence="1">
        <name>Fe cation</name>
        <dbReference type="ChEBI" id="CHEBI:24875"/>
    </cofactor>
    <text evidence="1">Binds 1 Fe cation per subunit.</text>
</comment>
<comment type="subunit">
    <text evidence="1">Homooctamer.</text>
</comment>
<comment type="subcellular location">
    <subcellularLocation>
        <location evidence="1">Cytoplasm</location>
    </subcellularLocation>
    <subcellularLocation>
        <location evidence="1">Nucleus</location>
    </subcellularLocation>
</comment>
<comment type="PTM">
    <text evidence="1">During the catalytic reaction, a sulfide is transferred from Cys-219 to a reaction intermediate, generating a dehydroalanine residue.</text>
</comment>
<comment type="similarity">
    <text evidence="1">Belongs to the THI4 family.</text>
</comment>
<accession>E3JV98</accession>
<evidence type="ECO:0000255" key="1">
    <source>
        <dbReference type="HAMAP-Rule" id="MF_03158"/>
    </source>
</evidence>
<organism>
    <name type="scientific">Puccinia graminis f. sp. tritici (strain CRL 75-36-700-3 / race SCCL)</name>
    <name type="common">Black stem rust fungus</name>
    <dbReference type="NCBI Taxonomy" id="418459"/>
    <lineage>
        <taxon>Eukaryota</taxon>
        <taxon>Fungi</taxon>
        <taxon>Dikarya</taxon>
        <taxon>Basidiomycota</taxon>
        <taxon>Pucciniomycotina</taxon>
        <taxon>Pucciniomycetes</taxon>
        <taxon>Pucciniales</taxon>
        <taxon>Pucciniaceae</taxon>
        <taxon>Puccinia</taxon>
    </lineage>
</organism>
<gene>
    <name type="ORF">PGTG_01304</name>
</gene>
<keyword id="KW-0963">Cytoplasm</keyword>
<keyword id="KW-0408">Iron</keyword>
<keyword id="KW-0479">Metal-binding</keyword>
<keyword id="KW-0520">NAD</keyword>
<keyword id="KW-0539">Nucleus</keyword>
<keyword id="KW-1185">Reference proteome</keyword>
<keyword id="KW-0784">Thiamine biosynthesis</keyword>
<keyword id="KW-0808">Transferase</keyword>
<proteinExistence type="inferred from homology"/>
<sequence>MSPPVATESMYKPTTIGTEAHDQALAAMKSNQAAPAKPVFKPEPAVNLEPIKFAPIKEHQVQRAMVRRYFQDMEERAISDVIIVGAGSAGLSCAYALGKARPDLKITILESNVAPGGGCWLGGQLMSAMVCRKPADKFLDEVGVPYEDEGNFVVVKHAALFTSTVLSKVLAMPNVKMFNATACEDLIIKPCPINPGVQRVAGCVTNWTLVSLNHDHQSCMDPSTITAPLVCSFAGHDGPFGAFCVKRIASAGLSEGLGDMRPLDMERAEDHIANKTREIVPGLIVGGMELSEFDGSARMGPTFGAMLLSGKRAAEVALQSLGRVKVEEGEVVGSAK</sequence>
<name>THI4_PUCGT</name>